<dbReference type="EC" id="5.4.2.7" evidence="1"/>
<dbReference type="EMBL" id="AE006468">
    <property type="protein sequence ID" value="AAL23384.1"/>
    <property type="molecule type" value="Genomic_DNA"/>
</dbReference>
<dbReference type="RefSeq" id="NP_463425.1">
    <property type="nucleotide sequence ID" value="NC_003197.2"/>
</dbReference>
<dbReference type="RefSeq" id="WP_000816454.1">
    <property type="nucleotide sequence ID" value="NC_003197.2"/>
</dbReference>
<dbReference type="SMR" id="P63923"/>
<dbReference type="STRING" id="99287.STM4569"/>
<dbReference type="PaxDb" id="99287-STM4569"/>
<dbReference type="GeneID" id="1256095"/>
<dbReference type="KEGG" id="stm:STM4569"/>
<dbReference type="PATRIC" id="fig|99287.12.peg.4811"/>
<dbReference type="HOGENOM" id="CLU_053861_0_0_6"/>
<dbReference type="OMA" id="SGHWEMM"/>
<dbReference type="PhylomeDB" id="P63923"/>
<dbReference type="BioCyc" id="SENT99287:STM4569-MONOMER"/>
<dbReference type="UniPathway" id="UPA00002">
    <property type="reaction ID" value="UER00467"/>
</dbReference>
<dbReference type="Proteomes" id="UP000001014">
    <property type="component" value="Chromosome"/>
</dbReference>
<dbReference type="GO" id="GO:0005829">
    <property type="term" value="C:cytosol"/>
    <property type="evidence" value="ECO:0000318"/>
    <property type="project" value="GO_Central"/>
</dbReference>
<dbReference type="GO" id="GO:0000287">
    <property type="term" value="F:magnesium ion binding"/>
    <property type="evidence" value="ECO:0007669"/>
    <property type="project" value="InterPro"/>
</dbReference>
<dbReference type="GO" id="GO:0030145">
    <property type="term" value="F:manganese ion binding"/>
    <property type="evidence" value="ECO:0007669"/>
    <property type="project" value="UniProtKB-UniRule"/>
</dbReference>
<dbReference type="GO" id="GO:0008973">
    <property type="term" value="F:phosphopentomutase activity"/>
    <property type="evidence" value="ECO:0000318"/>
    <property type="project" value="GO_Central"/>
</dbReference>
<dbReference type="GO" id="GO:0006018">
    <property type="term" value="P:2-deoxyribose 1-phosphate catabolic process"/>
    <property type="evidence" value="ECO:0007669"/>
    <property type="project" value="UniProtKB-UniRule"/>
</dbReference>
<dbReference type="GO" id="GO:0006015">
    <property type="term" value="P:5-phosphoribose 1-diphosphate biosynthetic process"/>
    <property type="evidence" value="ECO:0007669"/>
    <property type="project" value="UniProtKB-UniPathway"/>
</dbReference>
<dbReference type="GO" id="GO:0043094">
    <property type="term" value="P:metabolic compound salvage"/>
    <property type="evidence" value="ECO:0007669"/>
    <property type="project" value="InterPro"/>
</dbReference>
<dbReference type="GO" id="GO:0009117">
    <property type="term" value="P:nucleotide metabolic process"/>
    <property type="evidence" value="ECO:0007669"/>
    <property type="project" value="InterPro"/>
</dbReference>
<dbReference type="CDD" id="cd16009">
    <property type="entry name" value="PPM"/>
    <property type="match status" value="1"/>
</dbReference>
<dbReference type="FunFam" id="3.30.70.1250:FF:000001">
    <property type="entry name" value="Phosphopentomutase"/>
    <property type="match status" value="1"/>
</dbReference>
<dbReference type="Gene3D" id="3.40.720.10">
    <property type="entry name" value="Alkaline Phosphatase, subunit A"/>
    <property type="match status" value="1"/>
</dbReference>
<dbReference type="Gene3D" id="3.30.70.1250">
    <property type="entry name" value="Phosphopentomutase"/>
    <property type="match status" value="1"/>
</dbReference>
<dbReference type="HAMAP" id="MF_00740">
    <property type="entry name" value="Phosphopentomut"/>
    <property type="match status" value="1"/>
</dbReference>
<dbReference type="InterPro" id="IPR017850">
    <property type="entry name" value="Alkaline_phosphatase_core_sf"/>
</dbReference>
<dbReference type="InterPro" id="IPR010045">
    <property type="entry name" value="DeoB"/>
</dbReference>
<dbReference type="InterPro" id="IPR006124">
    <property type="entry name" value="Metalloenzyme"/>
</dbReference>
<dbReference type="InterPro" id="IPR024052">
    <property type="entry name" value="Phosphopentomutase_DeoB_cap_sf"/>
</dbReference>
<dbReference type="NCBIfam" id="TIGR01696">
    <property type="entry name" value="deoB"/>
    <property type="match status" value="1"/>
</dbReference>
<dbReference type="NCBIfam" id="NF003766">
    <property type="entry name" value="PRK05362.1"/>
    <property type="match status" value="1"/>
</dbReference>
<dbReference type="PANTHER" id="PTHR21110">
    <property type="entry name" value="PHOSPHOPENTOMUTASE"/>
    <property type="match status" value="1"/>
</dbReference>
<dbReference type="PANTHER" id="PTHR21110:SF0">
    <property type="entry name" value="PHOSPHOPENTOMUTASE"/>
    <property type="match status" value="1"/>
</dbReference>
<dbReference type="Pfam" id="PF01676">
    <property type="entry name" value="Metalloenzyme"/>
    <property type="match status" value="1"/>
</dbReference>
<dbReference type="PIRSF" id="PIRSF001491">
    <property type="entry name" value="Ppentomutase"/>
    <property type="match status" value="1"/>
</dbReference>
<dbReference type="SUPFAM" id="SSF53649">
    <property type="entry name" value="Alkaline phosphatase-like"/>
    <property type="match status" value="1"/>
</dbReference>
<dbReference type="SUPFAM" id="SSF143856">
    <property type="entry name" value="DeoB insert domain-like"/>
    <property type="match status" value="1"/>
</dbReference>
<organism>
    <name type="scientific">Salmonella typhimurium (strain LT2 / SGSC1412 / ATCC 700720)</name>
    <dbReference type="NCBI Taxonomy" id="99287"/>
    <lineage>
        <taxon>Bacteria</taxon>
        <taxon>Pseudomonadati</taxon>
        <taxon>Pseudomonadota</taxon>
        <taxon>Gammaproteobacteria</taxon>
        <taxon>Enterobacterales</taxon>
        <taxon>Enterobacteriaceae</taxon>
        <taxon>Salmonella</taxon>
    </lineage>
</organism>
<protein>
    <recommendedName>
        <fullName evidence="1">Phosphopentomutase</fullName>
        <ecNumber evidence="1">5.4.2.7</ecNumber>
    </recommendedName>
    <alternativeName>
        <fullName evidence="1">Phosphodeoxyribomutase</fullName>
    </alternativeName>
</protein>
<evidence type="ECO:0000255" key="1">
    <source>
        <dbReference type="HAMAP-Rule" id="MF_00740"/>
    </source>
</evidence>
<reference key="1">
    <citation type="journal article" date="2001" name="Nature">
        <title>Complete genome sequence of Salmonella enterica serovar Typhimurium LT2.</title>
        <authorList>
            <person name="McClelland M."/>
            <person name="Sanderson K.E."/>
            <person name="Spieth J."/>
            <person name="Clifton S.W."/>
            <person name="Latreille P."/>
            <person name="Courtney L."/>
            <person name="Porwollik S."/>
            <person name="Ali J."/>
            <person name="Dante M."/>
            <person name="Du F."/>
            <person name="Hou S."/>
            <person name="Layman D."/>
            <person name="Leonard S."/>
            <person name="Nguyen C."/>
            <person name="Scott K."/>
            <person name="Holmes A."/>
            <person name="Grewal N."/>
            <person name="Mulvaney E."/>
            <person name="Ryan E."/>
            <person name="Sun H."/>
            <person name="Florea L."/>
            <person name="Miller W."/>
            <person name="Stoneking T."/>
            <person name="Nhan M."/>
            <person name="Waterston R."/>
            <person name="Wilson R.K."/>
        </authorList>
    </citation>
    <scope>NUCLEOTIDE SEQUENCE [LARGE SCALE GENOMIC DNA]</scope>
    <source>
        <strain>LT2 / SGSC1412 / ATCC 700720</strain>
    </source>
</reference>
<accession>P63923</accession>
<accession>Q8XEK8</accession>
<gene>
    <name evidence="1" type="primary">deoB</name>
    <name type="ordered locus">STM4569</name>
</gene>
<keyword id="KW-0963">Cytoplasm</keyword>
<keyword id="KW-0413">Isomerase</keyword>
<keyword id="KW-0464">Manganese</keyword>
<keyword id="KW-0479">Metal-binding</keyword>
<keyword id="KW-1185">Reference proteome</keyword>
<name>DEOB_SALTY</name>
<sequence length="407" mass="44244">MKRAFIMVLDSFGIGATEDADRFGDVGSDTLGHIAEACAKGEADNGRKGPLNLPNLTRLGLVKAHEGSTGKIAAGMDGNADVIGAYAWAHELSSGKDTPSGHWEIAGVPVLFDWGYFSDHENSFPQELLDKLVKRANLPGYLGNCHSSGTVILDQLGEEHMKTGKPIFYTSADSVFQIACHEETFGLDKLYELCEIAREELTEGGYNIGRVIARPFIGDKAGNFQRTGNRHDLAVEPPAPTVLQKLVDEKQGHVVSVGKIADIYANCGITKKVKATGLDALFDATLKEMKEAGDKTIVFTNFVDFDSSWGHRRDIAGYAAGLELFDRRLPELMELVGEDDILILTADHGCDPSWTGTDHTREHIPVLIYGPKVKPGSLGHRETFADIGQTLATYFGTSPMDYGKNML</sequence>
<proteinExistence type="inferred from homology"/>
<comment type="function">
    <text evidence="1">Isomerase that catalyzes the conversion of deoxy-ribose 1-phosphate (dRib-1-P) and ribose 1-phosphate (Rib-1-P) to deoxy-ribose 5-phosphate (dRib-5-P) and ribose 5-phosphate (Rib-5-P), respectively.</text>
</comment>
<comment type="catalytic activity">
    <reaction evidence="1">
        <text>2-deoxy-alpha-D-ribose 1-phosphate = 2-deoxy-D-ribose 5-phosphate</text>
        <dbReference type="Rhea" id="RHEA:27658"/>
        <dbReference type="ChEBI" id="CHEBI:57259"/>
        <dbReference type="ChEBI" id="CHEBI:62877"/>
        <dbReference type="EC" id="5.4.2.7"/>
    </reaction>
</comment>
<comment type="catalytic activity">
    <reaction evidence="1">
        <text>alpha-D-ribose 1-phosphate = D-ribose 5-phosphate</text>
        <dbReference type="Rhea" id="RHEA:18793"/>
        <dbReference type="ChEBI" id="CHEBI:57720"/>
        <dbReference type="ChEBI" id="CHEBI:78346"/>
        <dbReference type="EC" id="5.4.2.7"/>
    </reaction>
</comment>
<comment type="cofactor">
    <cofactor evidence="1">
        <name>Mn(2+)</name>
        <dbReference type="ChEBI" id="CHEBI:29035"/>
    </cofactor>
    <text evidence="1">Binds 2 manganese ions.</text>
</comment>
<comment type="pathway">
    <text evidence="1">Carbohydrate degradation; 2-deoxy-D-ribose 1-phosphate degradation; D-glyceraldehyde 3-phosphate and acetaldehyde from 2-deoxy-alpha-D-ribose 1-phosphate: step 1/2.</text>
</comment>
<comment type="subcellular location">
    <subcellularLocation>
        <location evidence="1">Cytoplasm</location>
    </subcellularLocation>
</comment>
<comment type="similarity">
    <text evidence="1">Belongs to the phosphopentomutase family.</text>
</comment>
<feature type="chain" id="PRO_0000199835" description="Phosphopentomutase">
    <location>
        <begin position="1"/>
        <end position="407"/>
    </location>
</feature>
<feature type="binding site" evidence="1">
    <location>
        <position position="10"/>
    </location>
    <ligand>
        <name>Mn(2+)</name>
        <dbReference type="ChEBI" id="CHEBI:29035"/>
        <label>1</label>
    </ligand>
</feature>
<feature type="binding site" evidence="1">
    <location>
        <position position="306"/>
    </location>
    <ligand>
        <name>Mn(2+)</name>
        <dbReference type="ChEBI" id="CHEBI:29035"/>
        <label>2</label>
    </ligand>
</feature>
<feature type="binding site" evidence="1">
    <location>
        <position position="311"/>
    </location>
    <ligand>
        <name>Mn(2+)</name>
        <dbReference type="ChEBI" id="CHEBI:29035"/>
        <label>2</label>
    </ligand>
</feature>
<feature type="binding site" evidence="1">
    <location>
        <position position="347"/>
    </location>
    <ligand>
        <name>Mn(2+)</name>
        <dbReference type="ChEBI" id="CHEBI:29035"/>
        <label>1</label>
    </ligand>
</feature>
<feature type="binding site" evidence="1">
    <location>
        <position position="348"/>
    </location>
    <ligand>
        <name>Mn(2+)</name>
        <dbReference type="ChEBI" id="CHEBI:29035"/>
        <label>1</label>
    </ligand>
</feature>
<feature type="binding site" evidence="1">
    <location>
        <position position="359"/>
    </location>
    <ligand>
        <name>Mn(2+)</name>
        <dbReference type="ChEBI" id="CHEBI:29035"/>
        <label>2</label>
    </ligand>
</feature>